<dbReference type="EMBL" id="CP000097">
    <property type="protein sequence ID" value="ABB26929.1"/>
    <property type="molecule type" value="Genomic_DNA"/>
</dbReference>
<dbReference type="RefSeq" id="WP_011360725.1">
    <property type="nucleotide sequence ID" value="NC_007513.1"/>
</dbReference>
<dbReference type="SMR" id="Q3AW77"/>
<dbReference type="STRING" id="316279.Syncc9902_1971"/>
<dbReference type="KEGG" id="sye:Syncc9902_1971"/>
<dbReference type="eggNOG" id="COG0098">
    <property type="taxonomic scope" value="Bacteria"/>
</dbReference>
<dbReference type="HOGENOM" id="CLU_065898_2_1_3"/>
<dbReference type="OrthoDB" id="9809045at2"/>
<dbReference type="Proteomes" id="UP000002712">
    <property type="component" value="Chromosome"/>
</dbReference>
<dbReference type="GO" id="GO:0015935">
    <property type="term" value="C:small ribosomal subunit"/>
    <property type="evidence" value="ECO:0007669"/>
    <property type="project" value="InterPro"/>
</dbReference>
<dbReference type="GO" id="GO:0019843">
    <property type="term" value="F:rRNA binding"/>
    <property type="evidence" value="ECO:0007669"/>
    <property type="project" value="UniProtKB-UniRule"/>
</dbReference>
<dbReference type="GO" id="GO:0003735">
    <property type="term" value="F:structural constituent of ribosome"/>
    <property type="evidence" value="ECO:0007669"/>
    <property type="project" value="InterPro"/>
</dbReference>
<dbReference type="GO" id="GO:0006412">
    <property type="term" value="P:translation"/>
    <property type="evidence" value="ECO:0007669"/>
    <property type="project" value="UniProtKB-UniRule"/>
</dbReference>
<dbReference type="FunFam" id="3.30.230.10:FF:000002">
    <property type="entry name" value="30S ribosomal protein S5"/>
    <property type="match status" value="1"/>
</dbReference>
<dbReference type="Gene3D" id="3.30.160.20">
    <property type="match status" value="1"/>
</dbReference>
<dbReference type="Gene3D" id="3.30.230.10">
    <property type="match status" value="1"/>
</dbReference>
<dbReference type="HAMAP" id="MF_01307_B">
    <property type="entry name" value="Ribosomal_uS5_B"/>
    <property type="match status" value="1"/>
</dbReference>
<dbReference type="InterPro" id="IPR020568">
    <property type="entry name" value="Ribosomal_Su5_D2-typ_SF"/>
</dbReference>
<dbReference type="InterPro" id="IPR000851">
    <property type="entry name" value="Ribosomal_uS5"/>
</dbReference>
<dbReference type="InterPro" id="IPR005712">
    <property type="entry name" value="Ribosomal_uS5_bac-type"/>
</dbReference>
<dbReference type="InterPro" id="IPR005324">
    <property type="entry name" value="Ribosomal_uS5_C"/>
</dbReference>
<dbReference type="InterPro" id="IPR013810">
    <property type="entry name" value="Ribosomal_uS5_N"/>
</dbReference>
<dbReference type="InterPro" id="IPR018192">
    <property type="entry name" value="Ribosomal_uS5_N_CS"/>
</dbReference>
<dbReference type="InterPro" id="IPR014721">
    <property type="entry name" value="Ribsml_uS5_D2-typ_fold_subgr"/>
</dbReference>
<dbReference type="NCBIfam" id="TIGR01021">
    <property type="entry name" value="rpsE_bact"/>
    <property type="match status" value="1"/>
</dbReference>
<dbReference type="PANTHER" id="PTHR48277">
    <property type="entry name" value="MITOCHONDRIAL RIBOSOMAL PROTEIN S5"/>
    <property type="match status" value="1"/>
</dbReference>
<dbReference type="PANTHER" id="PTHR48277:SF1">
    <property type="entry name" value="MITOCHONDRIAL RIBOSOMAL PROTEIN S5"/>
    <property type="match status" value="1"/>
</dbReference>
<dbReference type="Pfam" id="PF00333">
    <property type="entry name" value="Ribosomal_S5"/>
    <property type="match status" value="1"/>
</dbReference>
<dbReference type="Pfam" id="PF03719">
    <property type="entry name" value="Ribosomal_S5_C"/>
    <property type="match status" value="1"/>
</dbReference>
<dbReference type="SUPFAM" id="SSF54768">
    <property type="entry name" value="dsRNA-binding domain-like"/>
    <property type="match status" value="1"/>
</dbReference>
<dbReference type="SUPFAM" id="SSF54211">
    <property type="entry name" value="Ribosomal protein S5 domain 2-like"/>
    <property type="match status" value="1"/>
</dbReference>
<dbReference type="PROSITE" id="PS00585">
    <property type="entry name" value="RIBOSOMAL_S5"/>
    <property type="match status" value="1"/>
</dbReference>
<dbReference type="PROSITE" id="PS50881">
    <property type="entry name" value="S5_DSRBD"/>
    <property type="match status" value="1"/>
</dbReference>
<comment type="function">
    <text evidence="1">With S4 and S12 plays an important role in translational accuracy.</text>
</comment>
<comment type="function">
    <text evidence="1">Located at the back of the 30S subunit body where it stabilizes the conformation of the head with respect to the body.</text>
</comment>
<comment type="subunit">
    <text evidence="1">Part of the 30S ribosomal subunit. Contacts proteins S4 and S8.</text>
</comment>
<comment type="domain">
    <text>The N-terminal domain interacts with the head of the 30S subunit; the C-terminal domain interacts with the body and contacts protein S4. The interaction surface between S4 and S5 is involved in control of translational fidelity.</text>
</comment>
<comment type="similarity">
    <text evidence="1">Belongs to the universal ribosomal protein uS5 family.</text>
</comment>
<sequence>MTDSSPQSNPNAVPGAADVPAAAQGQQQEQRRGGGGGGRGDRRGDRRGGRRGQDRDSEWQERVVQIRRVSKTVKGGKKMSFRAIVVVGNEKGQVGVGVGKAGDVIGAVRKGVADGKKHLVKVPLTRHSSIPTLSNGRDGAASVLIRPAAPGTGVIAGGSIRTVLELAGIKNVLAKRLGSKTPLNNARAAMVALSSLRTHKETAKERGISLEQIYS</sequence>
<keyword id="KW-1185">Reference proteome</keyword>
<keyword id="KW-0687">Ribonucleoprotein</keyword>
<keyword id="KW-0689">Ribosomal protein</keyword>
<keyword id="KW-0694">RNA-binding</keyword>
<keyword id="KW-0699">rRNA-binding</keyword>
<proteinExistence type="inferred from homology"/>
<organism>
    <name type="scientific">Synechococcus sp. (strain CC9902)</name>
    <dbReference type="NCBI Taxonomy" id="316279"/>
    <lineage>
        <taxon>Bacteria</taxon>
        <taxon>Bacillati</taxon>
        <taxon>Cyanobacteriota</taxon>
        <taxon>Cyanophyceae</taxon>
        <taxon>Synechococcales</taxon>
        <taxon>Synechococcaceae</taxon>
        <taxon>Synechococcus</taxon>
    </lineage>
</organism>
<name>RS5_SYNS9</name>
<protein>
    <recommendedName>
        <fullName evidence="1">Small ribosomal subunit protein uS5</fullName>
    </recommendedName>
    <alternativeName>
        <fullName evidence="3">30S ribosomal protein S5</fullName>
    </alternativeName>
</protein>
<feature type="chain" id="PRO_1000086070" description="Small ribosomal subunit protein uS5">
    <location>
        <begin position="1"/>
        <end position="215"/>
    </location>
</feature>
<feature type="domain" description="S5 DRBM" evidence="1">
    <location>
        <begin position="59"/>
        <end position="122"/>
    </location>
</feature>
<feature type="region of interest" description="Disordered" evidence="2">
    <location>
        <begin position="1"/>
        <end position="61"/>
    </location>
</feature>
<feature type="compositionally biased region" description="Polar residues" evidence="2">
    <location>
        <begin position="1"/>
        <end position="11"/>
    </location>
</feature>
<feature type="compositionally biased region" description="Low complexity" evidence="2">
    <location>
        <begin position="12"/>
        <end position="28"/>
    </location>
</feature>
<feature type="compositionally biased region" description="Basic and acidic residues" evidence="2">
    <location>
        <begin position="39"/>
        <end position="61"/>
    </location>
</feature>
<evidence type="ECO:0000255" key="1">
    <source>
        <dbReference type="HAMAP-Rule" id="MF_01307"/>
    </source>
</evidence>
<evidence type="ECO:0000256" key="2">
    <source>
        <dbReference type="SAM" id="MobiDB-lite"/>
    </source>
</evidence>
<evidence type="ECO:0000305" key="3"/>
<gene>
    <name evidence="1" type="primary">rpsE</name>
    <name evidence="1" type="synonym">rps5</name>
    <name type="ordered locus">Syncc9902_1971</name>
</gene>
<reference key="1">
    <citation type="submission" date="2005-08" db="EMBL/GenBank/DDBJ databases">
        <title>Complete sequence of Synechococcus sp. CC9902.</title>
        <authorList>
            <person name="Copeland A."/>
            <person name="Lucas S."/>
            <person name="Lapidus A."/>
            <person name="Barry K."/>
            <person name="Detter J.C."/>
            <person name="Glavina T."/>
            <person name="Hammon N."/>
            <person name="Israni S."/>
            <person name="Pitluck S."/>
            <person name="Martinez M."/>
            <person name="Schmutz J."/>
            <person name="Larimer F."/>
            <person name="Land M."/>
            <person name="Kyrpides N."/>
            <person name="Ivanova N."/>
            <person name="Richardson P."/>
        </authorList>
    </citation>
    <scope>NUCLEOTIDE SEQUENCE [LARGE SCALE GENOMIC DNA]</scope>
    <source>
        <strain>CC9902</strain>
    </source>
</reference>
<accession>Q3AW77</accession>